<keyword id="KW-0648">Protein biosynthesis</keyword>
<keyword id="KW-1185">Reference proteome</keyword>
<keyword id="KW-0808">Transferase</keyword>
<feature type="chain" id="PRO_1000020089" description="Methionyl-tRNA formyltransferase">
    <location>
        <begin position="1"/>
        <end position="318"/>
    </location>
</feature>
<feature type="binding site" evidence="1">
    <location>
        <begin position="110"/>
        <end position="113"/>
    </location>
    <ligand>
        <name>(6S)-5,6,7,8-tetrahydrofolate</name>
        <dbReference type="ChEBI" id="CHEBI:57453"/>
    </ligand>
</feature>
<reference key="1">
    <citation type="journal article" date="2006" name="Proc. Natl. Acad. Sci. U.S.A.">
        <title>Multireplicon genome architecture of Lactobacillus salivarius.</title>
        <authorList>
            <person name="Claesson M.J."/>
            <person name="Li Y."/>
            <person name="Leahy S."/>
            <person name="Canchaya C."/>
            <person name="van Pijkeren J.P."/>
            <person name="Cerdeno-Tarraga A.M."/>
            <person name="Parkhill J."/>
            <person name="Flynn S."/>
            <person name="O'Sullivan G.C."/>
            <person name="Collins J.K."/>
            <person name="Higgins D."/>
            <person name="Shanahan F."/>
            <person name="Fitzgerald G.F."/>
            <person name="van Sinderen D."/>
            <person name="O'Toole P.W."/>
        </authorList>
    </citation>
    <scope>NUCLEOTIDE SEQUENCE [LARGE SCALE GENOMIC DNA]</scope>
    <source>
        <strain>UCC118</strain>
    </source>
</reference>
<comment type="function">
    <text evidence="1">Attaches a formyl group to the free amino group of methionyl-tRNA(fMet). The formyl group appears to play a dual role in the initiator identity of N-formylmethionyl-tRNA by promoting its recognition by IF2 and preventing the misappropriation of this tRNA by the elongation apparatus.</text>
</comment>
<comment type="catalytic activity">
    <reaction evidence="1">
        <text>L-methionyl-tRNA(fMet) + (6R)-10-formyltetrahydrofolate = N-formyl-L-methionyl-tRNA(fMet) + (6S)-5,6,7,8-tetrahydrofolate + H(+)</text>
        <dbReference type="Rhea" id="RHEA:24380"/>
        <dbReference type="Rhea" id="RHEA-COMP:9952"/>
        <dbReference type="Rhea" id="RHEA-COMP:9953"/>
        <dbReference type="ChEBI" id="CHEBI:15378"/>
        <dbReference type="ChEBI" id="CHEBI:57453"/>
        <dbReference type="ChEBI" id="CHEBI:78530"/>
        <dbReference type="ChEBI" id="CHEBI:78844"/>
        <dbReference type="ChEBI" id="CHEBI:195366"/>
        <dbReference type="EC" id="2.1.2.9"/>
    </reaction>
</comment>
<comment type="similarity">
    <text evidence="1">Belongs to the Fmt family.</text>
</comment>
<evidence type="ECO:0000255" key="1">
    <source>
        <dbReference type="HAMAP-Rule" id="MF_00182"/>
    </source>
</evidence>
<accession>Q1WUB1</accession>
<gene>
    <name evidence="1" type="primary">fmt</name>
    <name type="ordered locus">LSL_0614</name>
</gene>
<organism>
    <name type="scientific">Ligilactobacillus salivarius (strain UCC118)</name>
    <name type="common">Lactobacillus salivarius</name>
    <dbReference type="NCBI Taxonomy" id="362948"/>
    <lineage>
        <taxon>Bacteria</taxon>
        <taxon>Bacillati</taxon>
        <taxon>Bacillota</taxon>
        <taxon>Bacilli</taxon>
        <taxon>Lactobacillales</taxon>
        <taxon>Lactobacillaceae</taxon>
        <taxon>Ligilactobacillus</taxon>
    </lineage>
</organism>
<protein>
    <recommendedName>
        <fullName evidence="1">Methionyl-tRNA formyltransferase</fullName>
        <ecNumber evidence="1">2.1.2.9</ecNumber>
    </recommendedName>
</protein>
<dbReference type="EC" id="2.1.2.9" evidence="1"/>
<dbReference type="EMBL" id="CP000233">
    <property type="protein sequence ID" value="ABD99424.1"/>
    <property type="molecule type" value="Genomic_DNA"/>
</dbReference>
<dbReference type="RefSeq" id="WP_003701719.1">
    <property type="nucleotide sequence ID" value="NC_007929.1"/>
</dbReference>
<dbReference type="RefSeq" id="YP_535507.1">
    <property type="nucleotide sequence ID" value="NC_007929.1"/>
</dbReference>
<dbReference type="SMR" id="Q1WUB1"/>
<dbReference type="STRING" id="362948.LSL_0614"/>
<dbReference type="KEGG" id="lsl:LSL_0614"/>
<dbReference type="PATRIC" id="fig|362948.14.peg.693"/>
<dbReference type="HOGENOM" id="CLU_033347_1_1_9"/>
<dbReference type="OrthoDB" id="9802815at2"/>
<dbReference type="Proteomes" id="UP000006559">
    <property type="component" value="Chromosome"/>
</dbReference>
<dbReference type="GO" id="GO:0005829">
    <property type="term" value="C:cytosol"/>
    <property type="evidence" value="ECO:0007669"/>
    <property type="project" value="TreeGrafter"/>
</dbReference>
<dbReference type="GO" id="GO:0004479">
    <property type="term" value="F:methionyl-tRNA formyltransferase activity"/>
    <property type="evidence" value="ECO:0007669"/>
    <property type="project" value="UniProtKB-UniRule"/>
</dbReference>
<dbReference type="CDD" id="cd08646">
    <property type="entry name" value="FMT_core_Met-tRNA-FMT_N"/>
    <property type="match status" value="1"/>
</dbReference>
<dbReference type="CDD" id="cd08704">
    <property type="entry name" value="Met_tRNA_FMT_C"/>
    <property type="match status" value="1"/>
</dbReference>
<dbReference type="FunFam" id="3.40.50.170:FF:000004">
    <property type="entry name" value="Methionyl-tRNA formyltransferase"/>
    <property type="match status" value="1"/>
</dbReference>
<dbReference type="Gene3D" id="3.10.25.10">
    <property type="entry name" value="Formyl transferase, C-terminal domain"/>
    <property type="match status" value="1"/>
</dbReference>
<dbReference type="Gene3D" id="3.40.50.170">
    <property type="entry name" value="Formyl transferase, N-terminal domain"/>
    <property type="match status" value="1"/>
</dbReference>
<dbReference type="HAMAP" id="MF_00182">
    <property type="entry name" value="Formyl_trans"/>
    <property type="match status" value="1"/>
</dbReference>
<dbReference type="InterPro" id="IPR005794">
    <property type="entry name" value="Fmt"/>
</dbReference>
<dbReference type="InterPro" id="IPR005793">
    <property type="entry name" value="Formyl_trans_C"/>
</dbReference>
<dbReference type="InterPro" id="IPR037022">
    <property type="entry name" value="Formyl_trans_C_sf"/>
</dbReference>
<dbReference type="InterPro" id="IPR002376">
    <property type="entry name" value="Formyl_transf_N"/>
</dbReference>
<dbReference type="InterPro" id="IPR036477">
    <property type="entry name" value="Formyl_transf_N_sf"/>
</dbReference>
<dbReference type="InterPro" id="IPR011034">
    <property type="entry name" value="Formyl_transferase-like_C_sf"/>
</dbReference>
<dbReference type="InterPro" id="IPR001555">
    <property type="entry name" value="GART_AS"/>
</dbReference>
<dbReference type="InterPro" id="IPR044135">
    <property type="entry name" value="Met-tRNA-FMT_C"/>
</dbReference>
<dbReference type="InterPro" id="IPR041711">
    <property type="entry name" value="Met-tRNA-FMT_N"/>
</dbReference>
<dbReference type="NCBIfam" id="TIGR00460">
    <property type="entry name" value="fmt"/>
    <property type="match status" value="1"/>
</dbReference>
<dbReference type="PANTHER" id="PTHR11138">
    <property type="entry name" value="METHIONYL-TRNA FORMYLTRANSFERASE"/>
    <property type="match status" value="1"/>
</dbReference>
<dbReference type="PANTHER" id="PTHR11138:SF5">
    <property type="entry name" value="METHIONYL-TRNA FORMYLTRANSFERASE, MITOCHONDRIAL"/>
    <property type="match status" value="1"/>
</dbReference>
<dbReference type="Pfam" id="PF02911">
    <property type="entry name" value="Formyl_trans_C"/>
    <property type="match status" value="1"/>
</dbReference>
<dbReference type="Pfam" id="PF00551">
    <property type="entry name" value="Formyl_trans_N"/>
    <property type="match status" value="1"/>
</dbReference>
<dbReference type="SUPFAM" id="SSF50486">
    <property type="entry name" value="FMT C-terminal domain-like"/>
    <property type="match status" value="1"/>
</dbReference>
<dbReference type="SUPFAM" id="SSF53328">
    <property type="entry name" value="Formyltransferase"/>
    <property type="match status" value="1"/>
</dbReference>
<dbReference type="PROSITE" id="PS00373">
    <property type="entry name" value="GART"/>
    <property type="match status" value="1"/>
</dbReference>
<sequence>MTNIVFMGTPAFAAPILEGIIENGYNVLAVVTQPDRPVGRKRVLHASPVKEVALKYGIKVFQPVKLSGSDEMQEIIDLQPDLIVTAAYGQFLPTKLIESVKIAAINVHGSLLPKYRGGAPVQYSIMNGDDKTGVTIIYMVKKMDAGDMLAQAELKIESTDDTGTIFEKMSILGRDVLLETLPKIISGNVEAVKQDENKVVFSPNIKPEEEILHLNLEAKEIDWKTRALRPAPGAYFKNFKGKRTKLWSIKPLEEKTEFAPGYVVNVDKHELKVSAYNGTVYSIIELQPAGKQKMDITSYLNGVGQGLKIGQRIIEDEE</sequence>
<name>FMT_LIGS1</name>
<proteinExistence type="inferred from homology"/>